<name>FTME_ASPFM</name>
<evidence type="ECO:0000250" key="1">
    <source>
        <dbReference type="UniProtKB" id="P04798"/>
    </source>
</evidence>
<evidence type="ECO:0000255" key="2"/>
<evidence type="ECO:0000269" key="3">
    <source>
    </source>
</evidence>
<evidence type="ECO:0000269" key="4">
    <source>
    </source>
</evidence>
<evidence type="ECO:0000269" key="5">
    <source>
    </source>
</evidence>
<evidence type="ECO:0000269" key="6">
    <source>
    </source>
</evidence>
<evidence type="ECO:0000269" key="7">
    <source>
    </source>
</evidence>
<evidence type="ECO:0000269" key="8">
    <source>
    </source>
</evidence>
<evidence type="ECO:0000269" key="9">
    <source>
    </source>
</evidence>
<evidence type="ECO:0000269" key="10">
    <source>
    </source>
</evidence>
<evidence type="ECO:0000303" key="11">
    <source>
    </source>
</evidence>
<evidence type="ECO:0000303" key="12">
    <source>
    </source>
</evidence>
<evidence type="ECO:0000305" key="13"/>
<evidence type="ECO:0000305" key="14">
    <source>
    </source>
</evidence>
<dbReference type="EC" id="1.14.19.71" evidence="6"/>
<dbReference type="EMBL" id="AB436628">
    <property type="protein sequence ID" value="BAH23999.1"/>
    <property type="molecule type" value="Genomic_DNA"/>
</dbReference>
<dbReference type="SMR" id="B9WZX4"/>
<dbReference type="OMA" id="HVWFGSN"/>
<dbReference type="BioCyc" id="MetaCyc:MONOMER-18765"/>
<dbReference type="BRENDA" id="1.14.19.71">
    <property type="organism ID" value="508"/>
</dbReference>
<dbReference type="GO" id="GO:0016020">
    <property type="term" value="C:membrane"/>
    <property type="evidence" value="ECO:0007669"/>
    <property type="project" value="UniProtKB-SubCell"/>
</dbReference>
<dbReference type="GO" id="GO:0020037">
    <property type="term" value="F:heme binding"/>
    <property type="evidence" value="ECO:0007669"/>
    <property type="project" value="InterPro"/>
</dbReference>
<dbReference type="GO" id="GO:0005506">
    <property type="term" value="F:iron ion binding"/>
    <property type="evidence" value="ECO:0007669"/>
    <property type="project" value="InterPro"/>
</dbReference>
<dbReference type="GO" id="GO:0004497">
    <property type="term" value="F:monooxygenase activity"/>
    <property type="evidence" value="ECO:0007669"/>
    <property type="project" value="UniProtKB-KW"/>
</dbReference>
<dbReference type="GO" id="GO:0016705">
    <property type="term" value="F:oxidoreductase activity, acting on paired donors, with incorporation or reduction of molecular oxygen"/>
    <property type="evidence" value="ECO:0007669"/>
    <property type="project" value="InterPro"/>
</dbReference>
<dbReference type="GO" id="GO:1902181">
    <property type="term" value="P:verruculogen biosynthetic process"/>
    <property type="evidence" value="ECO:0000314"/>
    <property type="project" value="GO_Central"/>
</dbReference>
<dbReference type="CDD" id="cd11065">
    <property type="entry name" value="CYP64-like"/>
    <property type="match status" value="1"/>
</dbReference>
<dbReference type="FunFam" id="1.10.630.10:FF:000160">
    <property type="entry name" value="Fumitremorgin C synthase"/>
    <property type="match status" value="1"/>
</dbReference>
<dbReference type="Gene3D" id="1.10.630.10">
    <property type="entry name" value="Cytochrome P450"/>
    <property type="match status" value="1"/>
</dbReference>
<dbReference type="InterPro" id="IPR001128">
    <property type="entry name" value="Cyt_P450"/>
</dbReference>
<dbReference type="InterPro" id="IPR002401">
    <property type="entry name" value="Cyt_P450_E_grp-I"/>
</dbReference>
<dbReference type="InterPro" id="IPR036396">
    <property type="entry name" value="Cyt_P450_sf"/>
</dbReference>
<dbReference type="InterPro" id="IPR050364">
    <property type="entry name" value="Cytochrome_P450_fung"/>
</dbReference>
<dbReference type="PANTHER" id="PTHR46300:SF1">
    <property type="entry name" value="P450, PUTATIVE (EUROFUNG)-RELATED"/>
    <property type="match status" value="1"/>
</dbReference>
<dbReference type="PANTHER" id="PTHR46300">
    <property type="entry name" value="P450, PUTATIVE (EUROFUNG)-RELATED-RELATED"/>
    <property type="match status" value="1"/>
</dbReference>
<dbReference type="Pfam" id="PF00067">
    <property type="entry name" value="p450"/>
    <property type="match status" value="1"/>
</dbReference>
<dbReference type="PRINTS" id="PR00463">
    <property type="entry name" value="EP450I"/>
</dbReference>
<dbReference type="PRINTS" id="PR00385">
    <property type="entry name" value="P450"/>
</dbReference>
<dbReference type="SUPFAM" id="SSF48264">
    <property type="entry name" value="Cytochrome P450"/>
    <property type="match status" value="1"/>
</dbReference>
<keyword id="KW-0017">Alkaloid metabolism</keyword>
<keyword id="KW-0349">Heme</keyword>
<keyword id="KW-0408">Iron</keyword>
<keyword id="KW-0472">Membrane</keyword>
<keyword id="KW-0479">Metal-binding</keyword>
<keyword id="KW-0503">Monooxygenase</keyword>
<keyword id="KW-0560">Oxidoreductase</keyword>
<keyword id="KW-0812">Transmembrane</keyword>
<keyword id="KW-1133">Transmembrane helix</keyword>
<keyword id="KW-0843">Virulence</keyword>
<accession>B9WZX4</accession>
<proteinExistence type="evidence at protein level"/>
<protein>
    <recommendedName>
        <fullName evidence="11">Fumitremorgin C synthase</fullName>
        <ecNumber evidence="6">1.14.19.71</ecNumber>
    </recommendedName>
    <alternativeName>
        <fullName evidence="11">Cytochrome P450 monooxygenase ftmP450-2</fullName>
    </alternativeName>
    <alternativeName>
        <fullName evidence="12">Fumitremorgin biosynthesis protein E</fullName>
    </alternativeName>
</protein>
<organism>
    <name type="scientific">Aspergillus fumigatus</name>
    <name type="common">Neosartorya fumigata</name>
    <dbReference type="NCBI Taxonomy" id="746128"/>
    <lineage>
        <taxon>Eukaryota</taxon>
        <taxon>Fungi</taxon>
        <taxon>Dikarya</taxon>
        <taxon>Ascomycota</taxon>
        <taxon>Pezizomycotina</taxon>
        <taxon>Eurotiomycetes</taxon>
        <taxon>Eurotiomycetidae</taxon>
        <taxon>Eurotiales</taxon>
        <taxon>Aspergillaceae</taxon>
        <taxon>Aspergillus</taxon>
        <taxon>Aspergillus subgen. Fumigati</taxon>
    </lineage>
</organism>
<sequence length="526" mass="58983">MERLPLSPAVLFLIIVLPILYLWIRYTAPARPHGKHLSLPPGPPRLPKIGNLHQVPRQIPWKKYKEWSDTYGPIMSVQLADTIAVVFSSWDLIKNHIERRNTIYSSRPSVPFFLHATGGLNASILPYGPEWKLQRAIRSSVLKPSMTVKYRDVQHVETTQLLHELLSTNDFPVCLRRCIASVFLTVAYGERCVDHAGLEAIDRLEELNRAIALHAEALFSGAAGILTQLVLPKALVDRLPVRWKKDADMLHNRLTADLVARTRAALVRPGWNWVKEFSMKDGIGSGDGDGEQGSKVELKRLAYMVGSLYEASMAASQALRVIILAGLLHPDATRRMHDELDAVVGTGRLPDFHDAAQLPYTQAFIKEAMRWRSLTPMGSPRATSDEDECRGYHIPCGATVLVNVWAINHDEAIFLDPFAFQPERWIENPDLPQLMYGMGQRACPGRHMGQDSLFLATARLFWAFDMALPDGADPIDQERFLDSGTTLAAFLPDFEVRFTPRSEKYQEVIENSMAVLPDVLSISATP</sequence>
<gene>
    <name evidence="11" type="primary">ftmP450-2</name>
    <name evidence="12" type="synonym">ftmE</name>
</gene>
<comment type="function">
    <text evidence="3 4 5 6 7 8 9 10 13 14">Cytochrome P450 monooxygenase; part of the gene cluster that mediates the biosynthesis of fumitremorgins, indole alkaloids that carry not only intriguing chemical structures, but also interesting biological and pharmacological activities (PubMed:19226505, PubMed:23649274). The biosynthesis of fumitremorgin-type alkaloids begins by condensation of the two amino acids L-tryptophan and L-proline to brevianamide F, catalyzed by the non-ribosomal peptide synthetase ftmA (PubMed:16755625). Brevianamide F is then prenylated by the prenyltransferase ftmPT1/ftmB in the presence of dimethylallyl diphosphate, resulting in the formation of tryprostatin B (PubMed:16000710, PubMed:21105662, PubMed:23090579). The three cytochrome P450 monooxygenases, ftmP450-1/ftmC, ftmP450-2/ftmE and ftmP450-3/FtmG, are responsible for the conversion of tryprostatin B to 6-hydroxytryprostatin B, tryprostatin A to fumitremorgin C and fumitremorgin C to 12,13-dihydroxyfumitremorgin C, respectively (PubMed:19226505). The putative methyltransferase ftmMT/ftmD is expected for the conversion of 6-hydroxytryprostatin B to tryprostatin A (Probable). FtmPT2/FtmH catalyzes the prenylation of 12,13-dihydroxyfumitre-morgin C in the presence of dimethylallyl diphosphate, resulting in the formation of fumitremorgin B (PubMed:18683158). Fumitremorgin B is further converted to verruculogen by ftmOx1/ftmF via the insertion of an endoperoxide bond between the two prenyl moieties (PubMed:19763315). In some fungal species, verruculogen is further converted to fumitremorgin A, but the enzymes involved in this step have not been identified yet (Probable).</text>
</comment>
<comment type="catalytic activity">
    <reaction evidence="6">
        <text>tryprostatin A + reduced [NADPH--hemoprotein reductase] + O2 = fumitremorgin C + oxidized [NADPH--hemoprotein reductase] + 2 H2O + H(+)</text>
        <dbReference type="Rhea" id="RHEA:35963"/>
        <dbReference type="Rhea" id="RHEA-COMP:11964"/>
        <dbReference type="Rhea" id="RHEA-COMP:11965"/>
        <dbReference type="ChEBI" id="CHEBI:15377"/>
        <dbReference type="ChEBI" id="CHEBI:15378"/>
        <dbReference type="ChEBI" id="CHEBI:15379"/>
        <dbReference type="ChEBI" id="CHEBI:57618"/>
        <dbReference type="ChEBI" id="CHEBI:58210"/>
        <dbReference type="ChEBI" id="CHEBI:72761"/>
        <dbReference type="ChEBI" id="CHEBI:72763"/>
        <dbReference type="EC" id="1.14.19.71"/>
    </reaction>
</comment>
<comment type="cofactor">
    <cofactor evidence="1">
        <name>heme</name>
        <dbReference type="ChEBI" id="CHEBI:30413"/>
    </cofactor>
</comment>
<comment type="pathway">
    <text evidence="6 10">Mycotoxin biosynthesis.</text>
</comment>
<comment type="subcellular location">
    <subcellularLocation>
        <location evidence="2">Membrane</location>
        <topology evidence="2">Single-pass membrane protein</topology>
    </subcellularLocation>
</comment>
<comment type="similarity">
    <text evidence="13">Belongs to the cytochrome P450 family.</text>
</comment>
<reference key="1">
    <citation type="journal article" date="2009" name="ChemBioChem">
        <title>Identification of cytochrome P450s required for fumitremorgin biosynthesis in Aspergillus fumigatus.</title>
        <authorList>
            <person name="Kato N."/>
            <person name="Suzuki H."/>
            <person name="Takagi H."/>
            <person name="Asami Y."/>
            <person name="Kakeya H."/>
            <person name="Uramoto M."/>
            <person name="Usui T."/>
            <person name="Takahashi S."/>
            <person name="Sugimoto Y."/>
            <person name="Osada H."/>
        </authorList>
    </citation>
    <scope>NUCLEOTIDE SEQUENCE [GENOMIC DNA]</scope>
    <scope>FUNCTION</scope>
    <scope>CATALYTIC ACTIVITY</scope>
    <scope>PATHWAY</scope>
    <source>
        <strain>BM939</strain>
    </source>
</reference>
<reference key="2">
    <citation type="journal article" date="2005" name="Microbiology">
        <title>Overproduction, purification and characterization of FtmPT1, a brevianamide F prenyltransferase from Aspergillus fumigatus.</title>
        <authorList>
            <person name="Grundmann A."/>
            <person name="Li S.M."/>
        </authorList>
    </citation>
    <scope>FUNCTION</scope>
</reference>
<reference key="3">
    <citation type="journal article" date="2006" name="ChemBioChem">
        <title>The fumitremorgin gene cluster of Aspergillus fumigatus: identification of a gene encoding brevianamide F synthetase.</title>
        <authorList>
            <person name="Maiya S."/>
            <person name="Grundmann A."/>
            <person name="Li S.M."/>
            <person name="Turner G."/>
        </authorList>
    </citation>
    <scope>FUNCTION</scope>
</reference>
<reference key="4">
    <citation type="journal article" date="2008" name="ChemBioChem">
        <title>FtmPT2, an N-prenyltransferase from Aspergillus fumigatus, catalyses the last step in the biosynthesis of fumitremorgin B.</title>
        <authorList>
            <person name="Grundmann A."/>
            <person name="Kuznetsova T."/>
            <person name="Afiyatullov S.S."/>
            <person name="Li S.M."/>
        </authorList>
    </citation>
    <scope>FUNCTION</scope>
</reference>
<reference key="5">
    <citation type="journal article" date="2009" name="Org. Biomol. Chem.">
        <title>FtmOx1, a non-heme Fe(II) and alpha-ketoglutarate-dependent dioxygenase, catalyses the endoperoxide formation of verruculogen in Aspergillus fumigatus.</title>
        <authorList>
            <person name="Steffan N."/>
            <person name="Grundmann A."/>
            <person name="Afiyatullov S."/>
            <person name="Ruan H."/>
            <person name="Li S.M."/>
        </authorList>
    </citation>
    <scope>FUNCTION</scope>
</reference>
<reference key="6">
    <citation type="journal article" date="2010" name="J. Am. Chem. Soc.">
        <title>Structure-function analysis of an enzymatic prenyl transfer reaction identifies a reaction chamber with modifiable specificity.</title>
        <authorList>
            <person name="Jost M."/>
            <person name="Zocher G."/>
            <person name="Tarcz S."/>
            <person name="Matuschek M."/>
            <person name="Xie X."/>
            <person name="Li S.M."/>
            <person name="Stehle T."/>
        </authorList>
    </citation>
    <scope>FUNCTION</scope>
</reference>
<reference key="7">
    <citation type="journal article" date="2012" name="Org. Biomol. Chem.">
        <title>Breaking the regioselectivity of indole prenyltransferases: identification of regular C3-prenylated hexahydropyrrolo[2,3-b]indoles as side products of the regular C2-prenyltransferase FtmPT1.</title>
        <authorList>
            <person name="Wollinsky B."/>
            <person name="Ludwig L."/>
            <person name="Xie X."/>
            <person name="Li S.M."/>
        </authorList>
    </citation>
    <scope>FUNCTION</scope>
</reference>
<reference key="8">
    <citation type="journal article" date="2013" name="Biosci. Biotechnol. Biochem.">
        <title>A point mutation in ftmD blocks the fumitremorgin biosynthetic pathway in Aspergillus fumigatus strain Af293.</title>
        <authorList>
            <person name="Kato N."/>
            <person name="Suzuki H."/>
            <person name="Okumura H."/>
            <person name="Takahashi S."/>
            <person name="Osada H."/>
        </authorList>
    </citation>
    <scope>FUNCTION</scope>
    <scope>PATHWAY</scope>
</reference>
<feature type="chain" id="PRO_0000424122" description="Fumitremorgin C synthase">
    <location>
        <begin position="1"/>
        <end position="526"/>
    </location>
</feature>
<feature type="transmembrane region" description="Helical" evidence="2">
    <location>
        <begin position="4"/>
        <end position="24"/>
    </location>
</feature>
<feature type="binding site" description="axial binding residue" evidence="1">
    <location>
        <position position="443"/>
    </location>
    <ligand>
        <name>heme</name>
        <dbReference type="ChEBI" id="CHEBI:30413"/>
    </ligand>
    <ligandPart>
        <name>Fe</name>
        <dbReference type="ChEBI" id="CHEBI:18248"/>
    </ligandPart>
</feature>